<dbReference type="EC" id="1.1.99.1" evidence="1"/>
<dbReference type="EC" id="1.2.1.8" evidence="1"/>
<dbReference type="EMBL" id="CP000266">
    <property type="protein sequence ID" value="ABF02596.1"/>
    <property type="molecule type" value="Genomic_DNA"/>
</dbReference>
<dbReference type="RefSeq" id="WP_001159106.1">
    <property type="nucleotide sequence ID" value="NC_008258.1"/>
</dbReference>
<dbReference type="SMR" id="Q0T7N0"/>
<dbReference type="CAZy" id="AA3">
    <property type="family name" value="Auxiliary Activities 3"/>
</dbReference>
<dbReference type="KEGG" id="sfv:SFV_0322"/>
<dbReference type="HOGENOM" id="CLU_002865_7_1_6"/>
<dbReference type="UniPathway" id="UPA00529">
    <property type="reaction ID" value="UER00385"/>
</dbReference>
<dbReference type="Proteomes" id="UP000000659">
    <property type="component" value="Chromosome"/>
</dbReference>
<dbReference type="GO" id="GO:0016020">
    <property type="term" value="C:membrane"/>
    <property type="evidence" value="ECO:0007669"/>
    <property type="project" value="TreeGrafter"/>
</dbReference>
<dbReference type="GO" id="GO:0008802">
    <property type="term" value="F:betaine-aldehyde dehydrogenase (NAD+) activity"/>
    <property type="evidence" value="ECO:0007669"/>
    <property type="project" value="UniProtKB-EC"/>
</dbReference>
<dbReference type="GO" id="GO:0008812">
    <property type="term" value="F:choline dehydrogenase activity"/>
    <property type="evidence" value="ECO:0007669"/>
    <property type="project" value="UniProtKB-UniRule"/>
</dbReference>
<dbReference type="GO" id="GO:0050660">
    <property type="term" value="F:flavin adenine dinucleotide binding"/>
    <property type="evidence" value="ECO:0007669"/>
    <property type="project" value="InterPro"/>
</dbReference>
<dbReference type="GO" id="GO:0019285">
    <property type="term" value="P:glycine betaine biosynthetic process from choline"/>
    <property type="evidence" value="ECO:0007669"/>
    <property type="project" value="UniProtKB-UniRule"/>
</dbReference>
<dbReference type="Gene3D" id="3.50.50.60">
    <property type="entry name" value="FAD/NAD(P)-binding domain"/>
    <property type="match status" value="1"/>
</dbReference>
<dbReference type="Gene3D" id="3.30.560.10">
    <property type="entry name" value="Glucose Oxidase, domain 3"/>
    <property type="match status" value="1"/>
</dbReference>
<dbReference type="HAMAP" id="MF_00750">
    <property type="entry name" value="Choline_dehydrogen"/>
    <property type="match status" value="1"/>
</dbReference>
<dbReference type="InterPro" id="IPR011533">
    <property type="entry name" value="BetA"/>
</dbReference>
<dbReference type="InterPro" id="IPR036188">
    <property type="entry name" value="FAD/NAD-bd_sf"/>
</dbReference>
<dbReference type="InterPro" id="IPR012132">
    <property type="entry name" value="GMC_OxRdtase"/>
</dbReference>
<dbReference type="InterPro" id="IPR000172">
    <property type="entry name" value="GMC_OxRdtase_N"/>
</dbReference>
<dbReference type="InterPro" id="IPR007867">
    <property type="entry name" value="GMC_OxRtase_C"/>
</dbReference>
<dbReference type="NCBIfam" id="TIGR01810">
    <property type="entry name" value="betA"/>
    <property type="match status" value="1"/>
</dbReference>
<dbReference type="NCBIfam" id="NF002550">
    <property type="entry name" value="PRK02106.1"/>
    <property type="match status" value="1"/>
</dbReference>
<dbReference type="PANTHER" id="PTHR11552:SF147">
    <property type="entry name" value="CHOLINE DEHYDROGENASE, MITOCHONDRIAL"/>
    <property type="match status" value="1"/>
</dbReference>
<dbReference type="PANTHER" id="PTHR11552">
    <property type="entry name" value="GLUCOSE-METHANOL-CHOLINE GMC OXIDOREDUCTASE"/>
    <property type="match status" value="1"/>
</dbReference>
<dbReference type="Pfam" id="PF05199">
    <property type="entry name" value="GMC_oxred_C"/>
    <property type="match status" value="1"/>
</dbReference>
<dbReference type="Pfam" id="PF00732">
    <property type="entry name" value="GMC_oxred_N"/>
    <property type="match status" value="1"/>
</dbReference>
<dbReference type="PIRSF" id="PIRSF000137">
    <property type="entry name" value="Alcohol_oxidase"/>
    <property type="match status" value="1"/>
</dbReference>
<dbReference type="SUPFAM" id="SSF54373">
    <property type="entry name" value="FAD-linked reductases, C-terminal domain"/>
    <property type="match status" value="1"/>
</dbReference>
<dbReference type="SUPFAM" id="SSF51905">
    <property type="entry name" value="FAD/NAD(P)-binding domain"/>
    <property type="match status" value="1"/>
</dbReference>
<dbReference type="PROSITE" id="PS00623">
    <property type="entry name" value="GMC_OXRED_1"/>
    <property type="match status" value="1"/>
</dbReference>
<dbReference type="PROSITE" id="PS00624">
    <property type="entry name" value="GMC_OXRED_2"/>
    <property type="match status" value="1"/>
</dbReference>
<organism>
    <name type="scientific">Shigella flexneri serotype 5b (strain 8401)</name>
    <dbReference type="NCBI Taxonomy" id="373384"/>
    <lineage>
        <taxon>Bacteria</taxon>
        <taxon>Pseudomonadati</taxon>
        <taxon>Pseudomonadota</taxon>
        <taxon>Gammaproteobacteria</taxon>
        <taxon>Enterobacterales</taxon>
        <taxon>Enterobacteriaceae</taxon>
        <taxon>Shigella</taxon>
    </lineage>
</organism>
<protein>
    <recommendedName>
        <fullName evidence="1">Oxygen-dependent choline dehydrogenase</fullName>
        <shortName evidence="1">CDH</shortName>
        <shortName evidence="1">CHD</shortName>
        <ecNumber evidence="1">1.1.99.1</ecNumber>
    </recommendedName>
    <alternativeName>
        <fullName evidence="1">Betaine aldehyde dehydrogenase</fullName>
        <shortName evidence="1">BADH</shortName>
        <ecNumber evidence="1">1.2.1.8</ecNumber>
    </alternativeName>
</protein>
<sequence length="556" mass="61835">MQFDYIIIGAGSAGNVLATRLTEDPNTSVLLLEAGGPDYRFDFRTQMPAALAFPLQGKRYNWAYETEPEPFMNNRRMECGRGKGLGGSSLINGMCYIRGNALDLDNWAQEPGLENWSYLDCLPYYRKAETRDVGENDYHGGDGPVSVTTSKPGVNPLFEAMIEAGVQAGYPRTDDLNGYQQEGFGPMDRTVTPQGRRASTARGYLDQAKSRPNLTIRTHAMTDHIIFDGKRAVGVEWLEGDSTIPTRATANKEVLLCAGAIASPQILQRSGVGNAELLAEFDIPLVHELPGVGENLQDHLEMYLQYECKEPVSLYPALQWWNQPKIGAEWLFGGTGVGASNHFEAGGFIRSREEFAWPNIQYHFLPVAINYNGSNAVKEHGFQCHVGSMRSPSRGHVRIKSRDPHQHPAILFNYMSHEQDWQEFRDAIRITREIMHQPALDQYRGREISPGVECQTDEQLDEFVRNHAETAFHPCGTCKMGYDEMSVVDGEGRVHGLEGLRVVDASIMPQIITGNLNATTIMIGEKIADMIRGQEALSRSTAGYFVANGMPVRAKK</sequence>
<proteinExistence type="inferred from homology"/>
<comment type="function">
    <text evidence="1">Involved in the biosynthesis of the osmoprotectant glycine betaine. Catalyzes the oxidation of choline to betaine aldehyde and betaine aldehyde to glycine betaine at the same rate.</text>
</comment>
<comment type="catalytic activity">
    <reaction evidence="1">
        <text>choline + A = betaine aldehyde + AH2</text>
        <dbReference type="Rhea" id="RHEA:17433"/>
        <dbReference type="ChEBI" id="CHEBI:13193"/>
        <dbReference type="ChEBI" id="CHEBI:15354"/>
        <dbReference type="ChEBI" id="CHEBI:15710"/>
        <dbReference type="ChEBI" id="CHEBI:17499"/>
        <dbReference type="EC" id="1.1.99.1"/>
    </reaction>
</comment>
<comment type="catalytic activity">
    <reaction evidence="1">
        <text>betaine aldehyde + NAD(+) + H2O = glycine betaine + NADH + 2 H(+)</text>
        <dbReference type="Rhea" id="RHEA:15305"/>
        <dbReference type="ChEBI" id="CHEBI:15377"/>
        <dbReference type="ChEBI" id="CHEBI:15378"/>
        <dbReference type="ChEBI" id="CHEBI:15710"/>
        <dbReference type="ChEBI" id="CHEBI:17750"/>
        <dbReference type="ChEBI" id="CHEBI:57540"/>
        <dbReference type="ChEBI" id="CHEBI:57945"/>
        <dbReference type="EC" id="1.2.1.8"/>
    </reaction>
</comment>
<comment type="cofactor">
    <cofactor evidence="1">
        <name>FAD</name>
        <dbReference type="ChEBI" id="CHEBI:57692"/>
    </cofactor>
</comment>
<comment type="pathway">
    <text evidence="1">Amine and polyamine biosynthesis; betaine biosynthesis via choline pathway; betaine aldehyde from choline (cytochrome c reductase route): step 1/1.</text>
</comment>
<comment type="similarity">
    <text evidence="1">Belongs to the GMC oxidoreductase family.</text>
</comment>
<evidence type="ECO:0000255" key="1">
    <source>
        <dbReference type="HAMAP-Rule" id="MF_00750"/>
    </source>
</evidence>
<name>BETA_SHIF8</name>
<keyword id="KW-0274">FAD</keyword>
<keyword id="KW-0285">Flavoprotein</keyword>
<keyword id="KW-0520">NAD</keyword>
<keyword id="KW-0560">Oxidoreductase</keyword>
<reference key="1">
    <citation type="journal article" date="2006" name="BMC Genomics">
        <title>Complete genome sequence of Shigella flexneri 5b and comparison with Shigella flexneri 2a.</title>
        <authorList>
            <person name="Nie H."/>
            <person name="Yang F."/>
            <person name="Zhang X."/>
            <person name="Yang J."/>
            <person name="Chen L."/>
            <person name="Wang J."/>
            <person name="Xiong Z."/>
            <person name="Peng J."/>
            <person name="Sun L."/>
            <person name="Dong J."/>
            <person name="Xue Y."/>
            <person name="Xu X."/>
            <person name="Chen S."/>
            <person name="Yao Z."/>
            <person name="Shen Y."/>
            <person name="Jin Q."/>
        </authorList>
    </citation>
    <scope>NUCLEOTIDE SEQUENCE [LARGE SCALE GENOMIC DNA]</scope>
    <source>
        <strain>8401</strain>
    </source>
</reference>
<gene>
    <name evidence="1" type="primary">betA</name>
    <name type="ordered locus">SFV_0322</name>
</gene>
<accession>Q0T7N0</accession>
<feature type="chain" id="PRO_1000046571" description="Oxygen-dependent choline dehydrogenase">
    <location>
        <begin position="1"/>
        <end position="556"/>
    </location>
</feature>
<feature type="active site" description="Proton acceptor" evidence="1">
    <location>
        <position position="473"/>
    </location>
</feature>
<feature type="binding site" evidence="1">
    <location>
        <begin position="4"/>
        <end position="33"/>
    </location>
    <ligand>
        <name>FAD</name>
        <dbReference type="ChEBI" id="CHEBI:57692"/>
    </ligand>
</feature>